<organism>
    <name type="scientific">Streptococcus pyogenes serotype M6 (strain ATCC BAA-946 / MGAS10394)</name>
    <dbReference type="NCBI Taxonomy" id="286636"/>
    <lineage>
        <taxon>Bacteria</taxon>
        <taxon>Bacillati</taxon>
        <taxon>Bacillota</taxon>
        <taxon>Bacilli</taxon>
        <taxon>Lactobacillales</taxon>
        <taxon>Streptococcaceae</taxon>
        <taxon>Streptococcus</taxon>
    </lineage>
</organism>
<name>Y1542_STRP6</name>
<evidence type="ECO:0000256" key="1">
    <source>
        <dbReference type="SAM" id="MobiDB-lite"/>
    </source>
</evidence>
<evidence type="ECO:0000305" key="2"/>
<accession>Q5XA86</accession>
<feature type="chain" id="PRO_0000210055" description="UPF0337 protein M6_Spy1542">
    <location>
        <begin position="1"/>
        <end position="66"/>
    </location>
</feature>
<feature type="region of interest" description="Disordered" evidence="1">
    <location>
        <begin position="1"/>
        <end position="22"/>
    </location>
</feature>
<feature type="compositionally biased region" description="Basic and acidic residues" evidence="1">
    <location>
        <begin position="1"/>
        <end position="10"/>
    </location>
</feature>
<gene>
    <name type="ordered locus">M6_Spy1542</name>
</gene>
<protein>
    <recommendedName>
        <fullName>UPF0337 protein M6_Spy1542</fullName>
    </recommendedName>
</protein>
<dbReference type="EMBL" id="CP000003">
    <property type="protein sequence ID" value="AAT87677.1"/>
    <property type="molecule type" value="Genomic_DNA"/>
</dbReference>
<dbReference type="RefSeq" id="WP_003058228.1">
    <property type="nucleotide sequence ID" value="NC_006086.1"/>
</dbReference>
<dbReference type="SMR" id="Q5XA86"/>
<dbReference type="KEGG" id="spa:M6_Spy1542"/>
<dbReference type="HOGENOM" id="CLU_135567_0_0_9"/>
<dbReference type="Proteomes" id="UP000001167">
    <property type="component" value="Chromosome"/>
</dbReference>
<dbReference type="Gene3D" id="1.10.1470.10">
    <property type="entry name" value="YjbJ"/>
    <property type="match status" value="1"/>
</dbReference>
<dbReference type="InterPro" id="IPR008462">
    <property type="entry name" value="CsbD"/>
</dbReference>
<dbReference type="InterPro" id="IPR036629">
    <property type="entry name" value="YjbJ_sf"/>
</dbReference>
<dbReference type="Pfam" id="PF05532">
    <property type="entry name" value="CsbD"/>
    <property type="match status" value="1"/>
</dbReference>
<dbReference type="SUPFAM" id="SSF69047">
    <property type="entry name" value="Hypothetical protein YjbJ"/>
    <property type="match status" value="1"/>
</dbReference>
<comment type="similarity">
    <text evidence="2">Belongs to the UPF0337 (CsbD) family.</text>
</comment>
<reference key="1">
    <citation type="journal article" date="2004" name="J. Infect. Dis.">
        <title>Progress toward characterization of the group A Streptococcus metagenome: complete genome sequence of a macrolide-resistant serotype M6 strain.</title>
        <authorList>
            <person name="Banks D.J."/>
            <person name="Porcella S.F."/>
            <person name="Barbian K.D."/>
            <person name="Beres S.B."/>
            <person name="Philips L.E."/>
            <person name="Voyich J.M."/>
            <person name="DeLeo F.R."/>
            <person name="Martin J.M."/>
            <person name="Somerville G.A."/>
            <person name="Musser J.M."/>
        </authorList>
    </citation>
    <scope>NUCLEOTIDE SEQUENCE [LARGE SCALE GENOMIC DNA]</scope>
    <source>
        <strain>ATCC BAA-946 / MGAS10394</strain>
    </source>
</reference>
<sequence length="66" mass="6961">MSEEKLKAKVEQASGSLKEGAGKLTGDKELEAKGFVEKTIAKGKELADDAKEAVEGAVDAVKEKLK</sequence>
<proteinExistence type="inferred from homology"/>